<comment type="catalytic activity">
    <reaction evidence="1">
        <text>D-serine = pyruvate + NH4(+)</text>
        <dbReference type="Rhea" id="RHEA:13977"/>
        <dbReference type="ChEBI" id="CHEBI:15361"/>
        <dbReference type="ChEBI" id="CHEBI:28938"/>
        <dbReference type="ChEBI" id="CHEBI:35247"/>
        <dbReference type="EC" id="4.3.1.18"/>
    </reaction>
</comment>
<comment type="cofactor">
    <cofactor evidence="1">
        <name>pyridoxal 5'-phosphate</name>
        <dbReference type="ChEBI" id="CHEBI:597326"/>
    </cofactor>
</comment>
<comment type="subunit">
    <text evidence="1">Monomer.</text>
</comment>
<comment type="similarity">
    <text evidence="1">Belongs to the serine/threonine dehydratase family. DsdA subfamily.</text>
</comment>
<keyword id="KW-0456">Lyase</keyword>
<keyword id="KW-0663">Pyridoxal phosphate</keyword>
<accession>B7MY25</accession>
<proteinExistence type="inferred from homology"/>
<organism>
    <name type="scientific">Escherichia coli O81 (strain ED1a)</name>
    <dbReference type="NCBI Taxonomy" id="585397"/>
    <lineage>
        <taxon>Bacteria</taxon>
        <taxon>Pseudomonadati</taxon>
        <taxon>Pseudomonadota</taxon>
        <taxon>Gammaproteobacteria</taxon>
        <taxon>Enterobacterales</taxon>
        <taxon>Enterobacteriaceae</taxon>
        <taxon>Escherichia</taxon>
    </lineage>
</organism>
<name>SDHD_ECO81</name>
<reference key="1">
    <citation type="journal article" date="2009" name="PLoS Genet.">
        <title>Organised genome dynamics in the Escherichia coli species results in highly diverse adaptive paths.</title>
        <authorList>
            <person name="Touchon M."/>
            <person name="Hoede C."/>
            <person name="Tenaillon O."/>
            <person name="Barbe V."/>
            <person name="Baeriswyl S."/>
            <person name="Bidet P."/>
            <person name="Bingen E."/>
            <person name="Bonacorsi S."/>
            <person name="Bouchier C."/>
            <person name="Bouvet O."/>
            <person name="Calteau A."/>
            <person name="Chiapello H."/>
            <person name="Clermont O."/>
            <person name="Cruveiller S."/>
            <person name="Danchin A."/>
            <person name="Diard M."/>
            <person name="Dossat C."/>
            <person name="Karoui M.E."/>
            <person name="Frapy E."/>
            <person name="Garry L."/>
            <person name="Ghigo J.M."/>
            <person name="Gilles A.M."/>
            <person name="Johnson J."/>
            <person name="Le Bouguenec C."/>
            <person name="Lescat M."/>
            <person name="Mangenot S."/>
            <person name="Martinez-Jehanne V."/>
            <person name="Matic I."/>
            <person name="Nassif X."/>
            <person name="Oztas S."/>
            <person name="Petit M.A."/>
            <person name="Pichon C."/>
            <person name="Rouy Z."/>
            <person name="Ruf C.S."/>
            <person name="Schneider D."/>
            <person name="Tourret J."/>
            <person name="Vacherie B."/>
            <person name="Vallenet D."/>
            <person name="Medigue C."/>
            <person name="Rocha E.P.C."/>
            <person name="Denamur E."/>
        </authorList>
    </citation>
    <scope>NUCLEOTIDE SEQUENCE [LARGE SCALE GENOMIC DNA]</scope>
    <source>
        <strain>ED1a</strain>
    </source>
</reference>
<feature type="chain" id="PRO_1000149388" description="D-serine dehydratase">
    <location>
        <begin position="1"/>
        <end position="442"/>
    </location>
</feature>
<feature type="modified residue" description="N6-(pyridoxal phosphate)lysine" evidence="1">
    <location>
        <position position="118"/>
    </location>
</feature>
<gene>
    <name evidence="1" type="primary">dsdA</name>
    <name type="ordered locus">ECED1_2813</name>
</gene>
<sequence>MENAKMNSLIAQYPLVEDLVALKETTWFNPGTTSLAEGLPYVGLTEQDVQDAHARLSRFAPYLAKAFPETAAAGGIIESELVAIPAMQKRLEKEYQQPISGQLLLKKDSHLPISGSIKARGGIYEVLAHAEKLALEAGLLTLEDDYSKLLSPEFKQFFSQYSIAVGSTGNLGLSIGIMSARIGFKVTVHMSADARAWKKAKLRSHGVTVVEYEQDYGVAVEEGRKAAQSDPNCFFIDDENSRTLFLGYSVAGQRLKAQFAQQGRIVDADNPLFVYLPCGVGGGPGGVAFGLKLAFGDHVHCFFAEPTHSPCMLLGVHTGLHDQISVQDIGIDNLTAADGLAVGRASGFVGRAMERLLDGFYTLSDQTMYDMLGWLAQEEGIRLEPSALAGMAGPQRVCASVSYQQLHGFSAEQLRNATHLVWATGGGMVPEEEMNQYLAKGR</sequence>
<protein>
    <recommendedName>
        <fullName evidence="1">D-serine dehydratase</fullName>
        <ecNumber evidence="1">4.3.1.18</ecNumber>
    </recommendedName>
    <alternativeName>
        <fullName evidence="1">D-serine deaminase</fullName>
        <shortName evidence="1">DSD</shortName>
    </alternativeName>
</protein>
<dbReference type="EC" id="4.3.1.18" evidence="1"/>
<dbReference type="EMBL" id="CU928162">
    <property type="protein sequence ID" value="CAR08991.2"/>
    <property type="molecule type" value="Genomic_DNA"/>
</dbReference>
<dbReference type="RefSeq" id="WP_000426394.1">
    <property type="nucleotide sequence ID" value="NC_011745.1"/>
</dbReference>
<dbReference type="SMR" id="B7MY25"/>
<dbReference type="KEGG" id="ecq:ECED1_2813"/>
<dbReference type="HOGENOM" id="CLU_035707_0_0_6"/>
<dbReference type="Proteomes" id="UP000000748">
    <property type="component" value="Chromosome"/>
</dbReference>
<dbReference type="GO" id="GO:0008721">
    <property type="term" value="F:D-serine ammonia-lyase activity"/>
    <property type="evidence" value="ECO:0007669"/>
    <property type="project" value="UniProtKB-EC"/>
</dbReference>
<dbReference type="GO" id="GO:0016836">
    <property type="term" value="F:hydro-lyase activity"/>
    <property type="evidence" value="ECO:0007669"/>
    <property type="project" value="UniProtKB-UniRule"/>
</dbReference>
<dbReference type="GO" id="GO:0030170">
    <property type="term" value="F:pyridoxal phosphate binding"/>
    <property type="evidence" value="ECO:0007669"/>
    <property type="project" value="InterPro"/>
</dbReference>
<dbReference type="GO" id="GO:0036088">
    <property type="term" value="P:D-serine catabolic process"/>
    <property type="evidence" value="ECO:0007669"/>
    <property type="project" value="TreeGrafter"/>
</dbReference>
<dbReference type="GO" id="GO:0009097">
    <property type="term" value="P:isoleucine biosynthetic process"/>
    <property type="evidence" value="ECO:0007669"/>
    <property type="project" value="TreeGrafter"/>
</dbReference>
<dbReference type="CDD" id="cd06447">
    <property type="entry name" value="D-Ser-dehyd"/>
    <property type="match status" value="1"/>
</dbReference>
<dbReference type="FunFam" id="3.40.50.1100:FF:000018">
    <property type="entry name" value="D-serine dehydratase"/>
    <property type="match status" value="1"/>
</dbReference>
<dbReference type="Gene3D" id="3.40.50.1100">
    <property type="match status" value="2"/>
</dbReference>
<dbReference type="HAMAP" id="MF_01030">
    <property type="entry name" value="D_Ser_dehydrat"/>
    <property type="match status" value="1"/>
</dbReference>
<dbReference type="InterPro" id="IPR011780">
    <property type="entry name" value="D_Ser_am_lyase"/>
</dbReference>
<dbReference type="InterPro" id="IPR050147">
    <property type="entry name" value="Ser/Thr_Dehydratase"/>
</dbReference>
<dbReference type="InterPro" id="IPR000634">
    <property type="entry name" value="Ser/Thr_deHydtase_PyrdxlP-BS"/>
</dbReference>
<dbReference type="InterPro" id="IPR001926">
    <property type="entry name" value="TrpB-like_PALP"/>
</dbReference>
<dbReference type="InterPro" id="IPR036052">
    <property type="entry name" value="TrpB-like_PALP_sf"/>
</dbReference>
<dbReference type="NCBIfam" id="TIGR02035">
    <property type="entry name" value="D_Ser_am_lyase"/>
    <property type="match status" value="1"/>
</dbReference>
<dbReference type="NCBIfam" id="NF002823">
    <property type="entry name" value="PRK02991.1"/>
    <property type="match status" value="1"/>
</dbReference>
<dbReference type="PANTHER" id="PTHR48078:SF9">
    <property type="entry name" value="D-SERINE DEHYDRATASE"/>
    <property type="match status" value="1"/>
</dbReference>
<dbReference type="PANTHER" id="PTHR48078">
    <property type="entry name" value="THREONINE DEHYDRATASE, MITOCHONDRIAL-RELATED"/>
    <property type="match status" value="1"/>
</dbReference>
<dbReference type="Pfam" id="PF00291">
    <property type="entry name" value="PALP"/>
    <property type="match status" value="1"/>
</dbReference>
<dbReference type="SUPFAM" id="SSF53686">
    <property type="entry name" value="Tryptophan synthase beta subunit-like PLP-dependent enzymes"/>
    <property type="match status" value="1"/>
</dbReference>
<dbReference type="PROSITE" id="PS00165">
    <property type="entry name" value="DEHYDRATASE_SER_THR"/>
    <property type="match status" value="1"/>
</dbReference>
<evidence type="ECO:0000255" key="1">
    <source>
        <dbReference type="HAMAP-Rule" id="MF_01030"/>
    </source>
</evidence>